<reference key="1">
    <citation type="submission" date="2006-03" db="EMBL/GenBank/DDBJ databases">
        <title>Complete genome sequence of Francisella tularensis LVS (Live Vaccine Strain).</title>
        <authorList>
            <person name="Chain P."/>
            <person name="Larimer F."/>
            <person name="Land M."/>
            <person name="Stilwagen S."/>
            <person name="Larsson P."/>
            <person name="Bearden S."/>
            <person name="Chu M."/>
            <person name="Oyston P."/>
            <person name="Forsman M."/>
            <person name="Andersson S."/>
            <person name="Lindler L."/>
            <person name="Titball R."/>
            <person name="Garcia E."/>
        </authorList>
    </citation>
    <scope>NUCLEOTIDE SEQUENCE [LARGE SCALE GENOMIC DNA]</scope>
    <source>
        <strain>LVS</strain>
    </source>
</reference>
<keyword id="KW-0067">ATP-binding</keyword>
<keyword id="KW-0997">Cell inner membrane</keyword>
<keyword id="KW-1003">Cell membrane</keyword>
<keyword id="KW-0963">Cytoplasm</keyword>
<keyword id="KW-0472">Membrane</keyword>
<keyword id="KW-0479">Metal-binding</keyword>
<keyword id="KW-0547">Nucleotide-binding</keyword>
<keyword id="KW-0653">Protein transport</keyword>
<keyword id="KW-1185">Reference proteome</keyword>
<keyword id="KW-1278">Translocase</keyword>
<keyword id="KW-0811">Translocation</keyword>
<keyword id="KW-0813">Transport</keyword>
<keyword id="KW-0862">Zinc</keyword>
<gene>
    <name evidence="1" type="primary">secA</name>
    <name type="ordered locus">FTL_1458</name>
</gene>
<comment type="function">
    <text evidence="1">Part of the Sec protein translocase complex. Interacts with the SecYEG preprotein conducting channel. Has a central role in coupling the hydrolysis of ATP to the transfer of proteins into and across the cell membrane, serving both as a receptor for the preprotein-SecB complex and as an ATP-driven molecular motor driving the stepwise translocation of polypeptide chains across the membrane.</text>
</comment>
<comment type="catalytic activity">
    <reaction evidence="1">
        <text>ATP + H2O + cellular proteinSide 1 = ADP + phosphate + cellular proteinSide 2.</text>
        <dbReference type="EC" id="7.4.2.8"/>
    </reaction>
</comment>
<comment type="cofactor">
    <cofactor evidence="1">
        <name>Zn(2+)</name>
        <dbReference type="ChEBI" id="CHEBI:29105"/>
    </cofactor>
    <text evidence="1">May bind 1 zinc ion per subunit.</text>
</comment>
<comment type="subunit">
    <text evidence="1">Monomer and homodimer. Part of the essential Sec protein translocation apparatus which comprises SecA, SecYEG and auxiliary proteins SecDF-YajC and YidC.</text>
</comment>
<comment type="subcellular location">
    <subcellularLocation>
        <location evidence="1">Cell inner membrane</location>
        <topology evidence="1">Peripheral membrane protein</topology>
        <orientation evidence="1">Cytoplasmic side</orientation>
    </subcellularLocation>
    <subcellularLocation>
        <location evidence="1">Cytoplasm</location>
    </subcellularLocation>
    <text evidence="1">Distribution is 50-50.</text>
</comment>
<comment type="similarity">
    <text evidence="1">Belongs to the SecA family.</text>
</comment>
<evidence type="ECO:0000255" key="1">
    <source>
        <dbReference type="HAMAP-Rule" id="MF_01382"/>
    </source>
</evidence>
<evidence type="ECO:0000256" key="2">
    <source>
        <dbReference type="SAM" id="MobiDB-lite"/>
    </source>
</evidence>
<accession>Q2A2E3</accession>
<organism>
    <name type="scientific">Francisella tularensis subsp. holarctica (strain LVS)</name>
    <dbReference type="NCBI Taxonomy" id="376619"/>
    <lineage>
        <taxon>Bacteria</taxon>
        <taxon>Pseudomonadati</taxon>
        <taxon>Pseudomonadota</taxon>
        <taxon>Gammaproteobacteria</taxon>
        <taxon>Thiotrichales</taxon>
        <taxon>Francisellaceae</taxon>
        <taxon>Francisella</taxon>
    </lineage>
</organism>
<dbReference type="EC" id="7.4.2.8" evidence="1"/>
<dbReference type="EMBL" id="AM233362">
    <property type="protein sequence ID" value="CAJ79897.1"/>
    <property type="molecule type" value="Genomic_DNA"/>
</dbReference>
<dbReference type="RefSeq" id="WP_003016755.1">
    <property type="nucleotide sequence ID" value="NZ_CP009694.1"/>
</dbReference>
<dbReference type="SMR" id="Q2A2E3"/>
<dbReference type="KEGG" id="ftl:FTL_1458"/>
<dbReference type="Proteomes" id="UP000001944">
    <property type="component" value="Chromosome"/>
</dbReference>
<dbReference type="GO" id="GO:0031522">
    <property type="term" value="C:cell envelope Sec protein transport complex"/>
    <property type="evidence" value="ECO:0007669"/>
    <property type="project" value="TreeGrafter"/>
</dbReference>
<dbReference type="GO" id="GO:0005829">
    <property type="term" value="C:cytosol"/>
    <property type="evidence" value="ECO:0007669"/>
    <property type="project" value="TreeGrafter"/>
</dbReference>
<dbReference type="GO" id="GO:0005886">
    <property type="term" value="C:plasma membrane"/>
    <property type="evidence" value="ECO:0007669"/>
    <property type="project" value="UniProtKB-SubCell"/>
</dbReference>
<dbReference type="GO" id="GO:0005524">
    <property type="term" value="F:ATP binding"/>
    <property type="evidence" value="ECO:0007669"/>
    <property type="project" value="UniProtKB-UniRule"/>
</dbReference>
<dbReference type="GO" id="GO:0046872">
    <property type="term" value="F:metal ion binding"/>
    <property type="evidence" value="ECO:0007669"/>
    <property type="project" value="UniProtKB-KW"/>
</dbReference>
<dbReference type="GO" id="GO:0008564">
    <property type="term" value="F:protein-exporting ATPase activity"/>
    <property type="evidence" value="ECO:0007669"/>
    <property type="project" value="UniProtKB-EC"/>
</dbReference>
<dbReference type="GO" id="GO:0065002">
    <property type="term" value="P:intracellular protein transmembrane transport"/>
    <property type="evidence" value="ECO:0007669"/>
    <property type="project" value="UniProtKB-UniRule"/>
</dbReference>
<dbReference type="GO" id="GO:0017038">
    <property type="term" value="P:protein import"/>
    <property type="evidence" value="ECO:0007669"/>
    <property type="project" value="InterPro"/>
</dbReference>
<dbReference type="GO" id="GO:0006605">
    <property type="term" value="P:protein targeting"/>
    <property type="evidence" value="ECO:0007669"/>
    <property type="project" value="UniProtKB-UniRule"/>
</dbReference>
<dbReference type="GO" id="GO:0043952">
    <property type="term" value="P:protein transport by the Sec complex"/>
    <property type="evidence" value="ECO:0007669"/>
    <property type="project" value="TreeGrafter"/>
</dbReference>
<dbReference type="CDD" id="cd17928">
    <property type="entry name" value="DEXDc_SecA"/>
    <property type="match status" value="1"/>
</dbReference>
<dbReference type="CDD" id="cd18803">
    <property type="entry name" value="SF2_C_secA"/>
    <property type="match status" value="1"/>
</dbReference>
<dbReference type="FunFam" id="3.40.50.300:FF:000113">
    <property type="entry name" value="Preprotein translocase subunit SecA"/>
    <property type="match status" value="1"/>
</dbReference>
<dbReference type="FunFam" id="3.90.1440.10:FF:000001">
    <property type="entry name" value="Preprotein translocase subunit SecA"/>
    <property type="match status" value="1"/>
</dbReference>
<dbReference type="FunFam" id="1.10.3060.10:FF:000003">
    <property type="entry name" value="Protein translocase subunit SecA"/>
    <property type="match status" value="1"/>
</dbReference>
<dbReference type="FunFam" id="3.40.50.300:FF:000334">
    <property type="entry name" value="Protein translocase subunit SecA"/>
    <property type="match status" value="1"/>
</dbReference>
<dbReference type="Gene3D" id="1.10.3060.10">
    <property type="entry name" value="Helical scaffold and wing domains of SecA"/>
    <property type="match status" value="1"/>
</dbReference>
<dbReference type="Gene3D" id="3.40.50.300">
    <property type="entry name" value="P-loop containing nucleotide triphosphate hydrolases"/>
    <property type="match status" value="2"/>
</dbReference>
<dbReference type="Gene3D" id="3.90.1440.10">
    <property type="entry name" value="SecA, preprotein cross-linking domain"/>
    <property type="match status" value="1"/>
</dbReference>
<dbReference type="HAMAP" id="MF_01382">
    <property type="entry name" value="SecA"/>
    <property type="match status" value="1"/>
</dbReference>
<dbReference type="InterPro" id="IPR014001">
    <property type="entry name" value="Helicase_ATP-bd"/>
</dbReference>
<dbReference type="InterPro" id="IPR001650">
    <property type="entry name" value="Helicase_C-like"/>
</dbReference>
<dbReference type="InterPro" id="IPR027417">
    <property type="entry name" value="P-loop_NTPase"/>
</dbReference>
<dbReference type="InterPro" id="IPR004027">
    <property type="entry name" value="SEC_C_motif"/>
</dbReference>
<dbReference type="InterPro" id="IPR000185">
    <property type="entry name" value="SecA"/>
</dbReference>
<dbReference type="InterPro" id="IPR020937">
    <property type="entry name" value="SecA_CS"/>
</dbReference>
<dbReference type="InterPro" id="IPR011115">
    <property type="entry name" value="SecA_DEAD"/>
</dbReference>
<dbReference type="InterPro" id="IPR014018">
    <property type="entry name" value="SecA_motor_DEAD"/>
</dbReference>
<dbReference type="InterPro" id="IPR011130">
    <property type="entry name" value="SecA_preprotein_X-link_dom"/>
</dbReference>
<dbReference type="InterPro" id="IPR044722">
    <property type="entry name" value="SecA_SF2_C"/>
</dbReference>
<dbReference type="InterPro" id="IPR011116">
    <property type="entry name" value="SecA_Wing/Scaffold"/>
</dbReference>
<dbReference type="InterPro" id="IPR036266">
    <property type="entry name" value="SecA_Wing/Scaffold_sf"/>
</dbReference>
<dbReference type="InterPro" id="IPR036670">
    <property type="entry name" value="SecA_X-link_sf"/>
</dbReference>
<dbReference type="NCBIfam" id="NF009538">
    <property type="entry name" value="PRK12904.1"/>
    <property type="match status" value="1"/>
</dbReference>
<dbReference type="NCBIfam" id="TIGR00963">
    <property type="entry name" value="secA"/>
    <property type="match status" value="1"/>
</dbReference>
<dbReference type="PANTHER" id="PTHR30612:SF0">
    <property type="entry name" value="CHLOROPLAST PROTEIN-TRANSPORTING ATPASE"/>
    <property type="match status" value="1"/>
</dbReference>
<dbReference type="PANTHER" id="PTHR30612">
    <property type="entry name" value="SECA INNER MEMBRANE COMPONENT OF SEC PROTEIN SECRETION SYSTEM"/>
    <property type="match status" value="1"/>
</dbReference>
<dbReference type="Pfam" id="PF21090">
    <property type="entry name" value="P-loop_SecA"/>
    <property type="match status" value="1"/>
</dbReference>
<dbReference type="Pfam" id="PF02810">
    <property type="entry name" value="SEC-C"/>
    <property type="match status" value="1"/>
</dbReference>
<dbReference type="Pfam" id="PF07517">
    <property type="entry name" value="SecA_DEAD"/>
    <property type="match status" value="1"/>
</dbReference>
<dbReference type="Pfam" id="PF01043">
    <property type="entry name" value="SecA_PP_bind"/>
    <property type="match status" value="1"/>
</dbReference>
<dbReference type="Pfam" id="PF07516">
    <property type="entry name" value="SecA_SW"/>
    <property type="match status" value="1"/>
</dbReference>
<dbReference type="PRINTS" id="PR00906">
    <property type="entry name" value="SECA"/>
</dbReference>
<dbReference type="SMART" id="SM00957">
    <property type="entry name" value="SecA_DEAD"/>
    <property type="match status" value="1"/>
</dbReference>
<dbReference type="SMART" id="SM00958">
    <property type="entry name" value="SecA_PP_bind"/>
    <property type="match status" value="1"/>
</dbReference>
<dbReference type="SUPFAM" id="SSF81886">
    <property type="entry name" value="Helical scaffold and wing domains of SecA"/>
    <property type="match status" value="1"/>
</dbReference>
<dbReference type="SUPFAM" id="SSF52540">
    <property type="entry name" value="P-loop containing nucleoside triphosphate hydrolases"/>
    <property type="match status" value="2"/>
</dbReference>
<dbReference type="SUPFAM" id="SSF81767">
    <property type="entry name" value="Pre-protein crosslinking domain of SecA"/>
    <property type="match status" value="1"/>
</dbReference>
<dbReference type="PROSITE" id="PS01312">
    <property type="entry name" value="SECA"/>
    <property type="match status" value="1"/>
</dbReference>
<dbReference type="PROSITE" id="PS51196">
    <property type="entry name" value="SECA_MOTOR_DEAD"/>
    <property type="match status" value="1"/>
</dbReference>
<feature type="chain" id="PRO_0000320814" description="Protein translocase subunit SecA">
    <location>
        <begin position="1"/>
        <end position="906"/>
    </location>
</feature>
<feature type="region of interest" description="Disordered" evidence="2">
    <location>
        <begin position="853"/>
        <end position="906"/>
    </location>
</feature>
<feature type="compositionally biased region" description="Basic and acidic residues" evidence="2">
    <location>
        <begin position="853"/>
        <end position="865"/>
    </location>
</feature>
<feature type="compositionally biased region" description="Basic and acidic residues" evidence="2">
    <location>
        <begin position="877"/>
        <end position="888"/>
    </location>
</feature>
<feature type="compositionally biased region" description="Basic residues" evidence="2">
    <location>
        <begin position="896"/>
        <end position="906"/>
    </location>
</feature>
<feature type="binding site" evidence="1">
    <location>
        <position position="86"/>
    </location>
    <ligand>
        <name>ATP</name>
        <dbReference type="ChEBI" id="CHEBI:30616"/>
    </ligand>
</feature>
<feature type="binding site" evidence="1">
    <location>
        <begin position="104"/>
        <end position="108"/>
    </location>
    <ligand>
        <name>ATP</name>
        <dbReference type="ChEBI" id="CHEBI:30616"/>
    </ligand>
</feature>
<feature type="binding site" evidence="1">
    <location>
        <position position="511"/>
    </location>
    <ligand>
        <name>ATP</name>
        <dbReference type="ChEBI" id="CHEBI:30616"/>
    </ligand>
</feature>
<feature type="binding site" evidence="1">
    <location>
        <position position="890"/>
    </location>
    <ligand>
        <name>Zn(2+)</name>
        <dbReference type="ChEBI" id="CHEBI:29105"/>
    </ligand>
</feature>
<feature type="binding site" evidence="1">
    <location>
        <position position="892"/>
    </location>
    <ligand>
        <name>Zn(2+)</name>
        <dbReference type="ChEBI" id="CHEBI:29105"/>
    </ligand>
</feature>
<feature type="binding site" evidence="1">
    <location>
        <position position="901"/>
    </location>
    <ligand>
        <name>Zn(2+)</name>
        <dbReference type="ChEBI" id="CHEBI:29105"/>
    </ligand>
</feature>
<feature type="binding site" evidence="1">
    <location>
        <position position="902"/>
    </location>
    <ligand>
        <name>Zn(2+)</name>
        <dbReference type="ChEBI" id="CHEBI:29105"/>
    </ligand>
</feature>
<sequence length="906" mass="103590">MLSLVQKIIGSRNERFIKKVSRIVQKINSLEPEFEKLSDEQLKAKTFEYRERLANGEILDNLLPEAFATVREAGKRTKNMRHYDVQLIGGIVLHQGKVAEMKTGEGKTLVATLPAYLNALTGDGVHVITVNDYLAKRDAELMSDIYEFLGMSVGVIVADLNPQQRKEAYACDITYGTNNEFGFDYLRDNMAYEKEQQVQRSRNYVIIDEVDSILIDEARTPLIISGASDDSSEMYNLFNRLVPYLEKQEKEEVENEQEQRDFYVDEKSKNAYLTEKGYAKIENMLKKEGILEEDDNLYSPHNITKMHYLNACLRAHSLYQLNIDYIVRDQEIVIIDESTGRAMPGRRWSDGLHQAIEAKEGVKINAENQTMASITFQNFFKLYNKIAGMTGTADTEAFELHSIYGLEVIIIPTNKPMIRKDHHDEIYGSVREKFDAIVEDIKERISKGQPVLVGTASIEASEVLSTLLKKKKIRHNVLNAKQHEKEASIIAMAGYPDNVTIATNMAGRGTDIILGGNLEVEIAQLEDPTPEDIAQIKAEWLKRNEAVKKAGGLCIIGSERHDSRRIDNQLRGRAARQGDPGESKFYLSMDDNLLRIFASQSMAERVKKGLKGGESLAFGFMSKVISKAQGKVESYHFDIRKNLLEYDNVVNTQRKVIYEQRQSFLEAEDVSDILADIRIDVAEQLFHDYVSAGSMHELWDLEGLEKALKSDFMIELDLQKLYEEDDSLGEEDLKRLVREAIEIEFVEKTKNLDSGAVRQFEKFSLLQSLDTHWREHLSSIDHLRNSINLRGYAQKDPKNEYKKEAFELFSTMLDNFKYEVISSLAKIRIATEEETQRAQQEWQESMSDIKAEHESVIDNNQRHDEDEQEEAPKVQQVRREGPKVKRNDPCPCGSGKKYKQCHGKVE</sequence>
<name>SECA_FRATH</name>
<protein>
    <recommendedName>
        <fullName evidence="1">Protein translocase subunit SecA</fullName>
        <ecNumber evidence="1">7.4.2.8</ecNumber>
    </recommendedName>
</protein>
<proteinExistence type="inferred from homology"/>